<sequence length="111" mass="12987">MKKSYRVKKEKDFKALFDAGHSVANRKFVVYCLDRNLPHFRVGLSVSKHLGNAVTRNRVKRRLRHALMDMSSQLEHQDFVVIARKGVEDLSYQDIYSNLVHVLKIAKLYKD</sequence>
<proteinExistence type="inferred from homology"/>
<feature type="chain" id="PRO_0000198546" description="Ribonuclease P protein component">
    <location>
        <begin position="1"/>
        <end position="111"/>
    </location>
</feature>
<accession>Q5LY00</accession>
<gene>
    <name evidence="1" type="primary">rnpA</name>
    <name type="ordered locus">str1811</name>
</gene>
<protein>
    <recommendedName>
        <fullName evidence="1">Ribonuclease P protein component</fullName>
        <shortName evidence="1">RNase P protein</shortName>
        <shortName evidence="1">RNaseP protein</shortName>
        <ecNumber evidence="1">3.1.26.5</ecNumber>
    </recommendedName>
    <alternativeName>
        <fullName evidence="1">Protein C5</fullName>
    </alternativeName>
</protein>
<comment type="function">
    <text evidence="1">RNaseP catalyzes the removal of the 5'-leader sequence from pre-tRNA to produce the mature 5'-terminus. It can also cleave other RNA substrates such as 4.5S RNA. The protein component plays an auxiliary but essential role in vivo by binding to the 5'-leader sequence and broadening the substrate specificity of the ribozyme.</text>
</comment>
<comment type="catalytic activity">
    <reaction evidence="1">
        <text>Endonucleolytic cleavage of RNA, removing 5'-extranucleotides from tRNA precursor.</text>
        <dbReference type="EC" id="3.1.26.5"/>
    </reaction>
</comment>
<comment type="subunit">
    <text evidence="1">Consists of a catalytic RNA component (M1 or rnpB) and a protein subunit.</text>
</comment>
<comment type="similarity">
    <text evidence="1">Belongs to the RnpA family.</text>
</comment>
<name>RNPA_STRT1</name>
<dbReference type="EC" id="3.1.26.5" evidence="1"/>
<dbReference type="EMBL" id="CP000024">
    <property type="protein sequence ID" value="AAV63327.1"/>
    <property type="molecule type" value="Genomic_DNA"/>
</dbReference>
<dbReference type="RefSeq" id="WP_002953528.1">
    <property type="nucleotide sequence ID" value="NC_006449.1"/>
</dbReference>
<dbReference type="SMR" id="Q5LY00"/>
<dbReference type="GeneID" id="66899548"/>
<dbReference type="KEGG" id="stc:str1811"/>
<dbReference type="HOGENOM" id="CLU_117179_9_1_9"/>
<dbReference type="GO" id="GO:0030677">
    <property type="term" value="C:ribonuclease P complex"/>
    <property type="evidence" value="ECO:0007669"/>
    <property type="project" value="TreeGrafter"/>
</dbReference>
<dbReference type="GO" id="GO:0042781">
    <property type="term" value="F:3'-tRNA processing endoribonuclease activity"/>
    <property type="evidence" value="ECO:0007669"/>
    <property type="project" value="TreeGrafter"/>
</dbReference>
<dbReference type="GO" id="GO:0004526">
    <property type="term" value="F:ribonuclease P activity"/>
    <property type="evidence" value="ECO:0007669"/>
    <property type="project" value="UniProtKB-UniRule"/>
</dbReference>
<dbReference type="GO" id="GO:0000049">
    <property type="term" value="F:tRNA binding"/>
    <property type="evidence" value="ECO:0007669"/>
    <property type="project" value="UniProtKB-UniRule"/>
</dbReference>
<dbReference type="GO" id="GO:0001682">
    <property type="term" value="P:tRNA 5'-leader removal"/>
    <property type="evidence" value="ECO:0007669"/>
    <property type="project" value="UniProtKB-UniRule"/>
</dbReference>
<dbReference type="FunFam" id="3.30.230.10:FF:000021">
    <property type="entry name" value="Ribonuclease P protein component"/>
    <property type="match status" value="1"/>
</dbReference>
<dbReference type="Gene3D" id="3.30.230.10">
    <property type="match status" value="1"/>
</dbReference>
<dbReference type="HAMAP" id="MF_00227">
    <property type="entry name" value="RNase_P"/>
    <property type="match status" value="1"/>
</dbReference>
<dbReference type="InterPro" id="IPR020568">
    <property type="entry name" value="Ribosomal_Su5_D2-typ_SF"/>
</dbReference>
<dbReference type="InterPro" id="IPR014721">
    <property type="entry name" value="Ribsml_uS5_D2-typ_fold_subgr"/>
</dbReference>
<dbReference type="InterPro" id="IPR000100">
    <property type="entry name" value="RNase_P"/>
</dbReference>
<dbReference type="InterPro" id="IPR020539">
    <property type="entry name" value="RNase_P_CS"/>
</dbReference>
<dbReference type="NCBIfam" id="TIGR00188">
    <property type="entry name" value="rnpA"/>
    <property type="match status" value="1"/>
</dbReference>
<dbReference type="PANTHER" id="PTHR33992">
    <property type="entry name" value="RIBONUCLEASE P PROTEIN COMPONENT"/>
    <property type="match status" value="1"/>
</dbReference>
<dbReference type="PANTHER" id="PTHR33992:SF1">
    <property type="entry name" value="RIBONUCLEASE P PROTEIN COMPONENT"/>
    <property type="match status" value="1"/>
</dbReference>
<dbReference type="Pfam" id="PF00825">
    <property type="entry name" value="Ribonuclease_P"/>
    <property type="match status" value="1"/>
</dbReference>
<dbReference type="SUPFAM" id="SSF54211">
    <property type="entry name" value="Ribosomal protein S5 domain 2-like"/>
    <property type="match status" value="1"/>
</dbReference>
<dbReference type="PROSITE" id="PS00648">
    <property type="entry name" value="RIBONUCLEASE_P"/>
    <property type="match status" value="1"/>
</dbReference>
<evidence type="ECO:0000255" key="1">
    <source>
        <dbReference type="HAMAP-Rule" id="MF_00227"/>
    </source>
</evidence>
<keyword id="KW-0255">Endonuclease</keyword>
<keyword id="KW-0378">Hydrolase</keyword>
<keyword id="KW-0540">Nuclease</keyword>
<keyword id="KW-0694">RNA-binding</keyword>
<keyword id="KW-0819">tRNA processing</keyword>
<reference key="1">
    <citation type="journal article" date="2004" name="Nat. Biotechnol.">
        <title>Complete sequence and comparative genome analysis of the dairy bacterium Streptococcus thermophilus.</title>
        <authorList>
            <person name="Bolotin A."/>
            <person name="Quinquis B."/>
            <person name="Renault P."/>
            <person name="Sorokin A."/>
            <person name="Ehrlich S.D."/>
            <person name="Kulakauskas S."/>
            <person name="Lapidus A."/>
            <person name="Goltsman E."/>
            <person name="Mazur M."/>
            <person name="Pusch G.D."/>
            <person name="Fonstein M."/>
            <person name="Overbeek R."/>
            <person name="Kyprides N."/>
            <person name="Purnelle B."/>
            <person name="Prozzi D."/>
            <person name="Ngui K."/>
            <person name="Masuy D."/>
            <person name="Hancy F."/>
            <person name="Burteau S."/>
            <person name="Boutry M."/>
            <person name="Delcour J."/>
            <person name="Goffeau A."/>
            <person name="Hols P."/>
        </authorList>
    </citation>
    <scope>NUCLEOTIDE SEQUENCE [LARGE SCALE GENOMIC DNA]</scope>
    <source>
        <strain>CNRZ 1066</strain>
    </source>
</reference>
<organism>
    <name type="scientific">Streptococcus thermophilus (strain CNRZ 1066)</name>
    <dbReference type="NCBI Taxonomy" id="299768"/>
    <lineage>
        <taxon>Bacteria</taxon>
        <taxon>Bacillati</taxon>
        <taxon>Bacillota</taxon>
        <taxon>Bacilli</taxon>
        <taxon>Lactobacillales</taxon>
        <taxon>Streptococcaceae</taxon>
        <taxon>Streptococcus</taxon>
    </lineage>
</organism>